<comment type="function">
    <text evidence="1">Involved in pre-rRNA and tRNA processing. Utilizes the methyl donor S-adenosyl-L-methionine to catalyze the site-specific 2'-hydroxyl methylation of ribose moieties in rRNA and tRNA. Site specificity is provided by a guide RNA that base pairs with the substrate. Methylation occurs at a characteristic distance from the sequence involved in base pairing with the guide RNA.</text>
</comment>
<comment type="subunit">
    <text evidence="1">Interacts with nop5. Component of box C/D small ribonucleoprotein (sRNP) particles that contain rpl7ae, FlpA and nop5, plus a guide RNA.</text>
</comment>
<comment type="similarity">
    <text evidence="1">Belongs to the methyltransferase superfamily. Fibrillarin family.</text>
</comment>
<keyword id="KW-0489">Methyltransferase</keyword>
<keyword id="KW-0694">RNA-binding</keyword>
<keyword id="KW-0698">rRNA processing</keyword>
<keyword id="KW-0808">Transferase</keyword>
<keyword id="KW-0819">tRNA processing</keyword>
<feature type="chain" id="PRO_1000205341" description="Fibrillarin-like rRNA/tRNA 2'-O-methyltransferase">
    <location>
        <begin position="1"/>
        <end position="232"/>
    </location>
</feature>
<feature type="binding site" evidence="1">
    <location>
        <begin position="89"/>
        <end position="90"/>
    </location>
    <ligand>
        <name>S-adenosyl-L-methionine</name>
        <dbReference type="ChEBI" id="CHEBI:59789"/>
    </ligand>
</feature>
<feature type="binding site" evidence="1">
    <location>
        <begin position="108"/>
        <end position="109"/>
    </location>
    <ligand>
        <name>S-adenosyl-L-methionine</name>
        <dbReference type="ChEBI" id="CHEBI:59789"/>
    </ligand>
</feature>
<feature type="binding site" evidence="1">
    <location>
        <begin position="133"/>
        <end position="134"/>
    </location>
    <ligand>
        <name>S-adenosyl-L-methionine</name>
        <dbReference type="ChEBI" id="CHEBI:59789"/>
    </ligand>
</feature>
<feature type="binding site" evidence="1">
    <location>
        <begin position="153"/>
        <end position="156"/>
    </location>
    <ligand>
        <name>S-adenosyl-L-methionine</name>
        <dbReference type="ChEBI" id="CHEBI:59789"/>
    </ligand>
</feature>
<proteinExistence type="inferred from homology"/>
<gene>
    <name evidence="1" type="primary">flpA</name>
    <name type="ordered locus">M1627_1336</name>
</gene>
<evidence type="ECO:0000255" key="1">
    <source>
        <dbReference type="HAMAP-Rule" id="MF_00351"/>
    </source>
</evidence>
<reference key="1">
    <citation type="journal article" date="2009" name="Proc. Natl. Acad. Sci. U.S.A.">
        <title>Biogeography of the Sulfolobus islandicus pan-genome.</title>
        <authorList>
            <person name="Reno M.L."/>
            <person name="Held N.L."/>
            <person name="Fields C.J."/>
            <person name="Burke P.V."/>
            <person name="Whitaker R.J."/>
        </authorList>
    </citation>
    <scope>NUCLEOTIDE SEQUENCE [LARGE SCALE GENOMIC DNA]</scope>
    <source>
        <strain>M.16.27</strain>
    </source>
</reference>
<protein>
    <recommendedName>
        <fullName evidence="1">Fibrillarin-like rRNA/tRNA 2'-O-methyltransferase</fullName>
        <ecNumber evidence="1">2.1.1.-</ecNumber>
    </recommendedName>
</protein>
<sequence>MSEVITVKQTNMENIYECEFNDGSFRLCTRNLVSGFNVYGERLIKYEGVEYREWNAFRSKLAGAILKGLKTNPIRKGTKVLYLGAASGTTISHVSDIIELNGKAYGVEFSPRVVRELLLVAQRRPNIFPLLADARFPQSYKSVVENVDVLYVDIAQPDQTDIAIYNARFFLKVNGYMLLVIKARSIDVTKDPKEIYKAEVEKLENSNFETIQIINLDPYDKDHAIVLSRYKG</sequence>
<name>FLPA_SACI3</name>
<organism>
    <name type="scientific">Saccharolobus islandicus (strain M.16.27)</name>
    <name type="common">Sulfolobus islandicus</name>
    <dbReference type="NCBI Taxonomy" id="427318"/>
    <lineage>
        <taxon>Archaea</taxon>
        <taxon>Thermoproteota</taxon>
        <taxon>Thermoprotei</taxon>
        <taxon>Sulfolobales</taxon>
        <taxon>Sulfolobaceae</taxon>
        <taxon>Saccharolobus</taxon>
    </lineage>
</organism>
<dbReference type="EC" id="2.1.1.-" evidence="1"/>
<dbReference type="EMBL" id="CP001401">
    <property type="protein sequence ID" value="ACP55219.1"/>
    <property type="molecule type" value="Genomic_DNA"/>
</dbReference>
<dbReference type="RefSeq" id="WP_012718801.1">
    <property type="nucleotide sequence ID" value="NC_012632.1"/>
</dbReference>
<dbReference type="SMR" id="C3N5E4"/>
<dbReference type="KEGG" id="sim:M1627_1336"/>
<dbReference type="HOGENOM" id="CLU_059055_2_0_2"/>
<dbReference type="Proteomes" id="UP000002307">
    <property type="component" value="Chromosome"/>
</dbReference>
<dbReference type="GO" id="GO:1990259">
    <property type="term" value="F:histone H2AQ104 methyltransferase activity"/>
    <property type="evidence" value="ECO:0007669"/>
    <property type="project" value="TreeGrafter"/>
</dbReference>
<dbReference type="GO" id="GO:0003723">
    <property type="term" value="F:RNA binding"/>
    <property type="evidence" value="ECO:0007669"/>
    <property type="project" value="UniProtKB-UniRule"/>
</dbReference>
<dbReference type="GO" id="GO:0008649">
    <property type="term" value="F:rRNA methyltransferase activity"/>
    <property type="evidence" value="ECO:0007669"/>
    <property type="project" value="TreeGrafter"/>
</dbReference>
<dbReference type="GO" id="GO:0000494">
    <property type="term" value="P:box C/D sno(s)RNA 3'-end processing"/>
    <property type="evidence" value="ECO:0007669"/>
    <property type="project" value="TreeGrafter"/>
</dbReference>
<dbReference type="GO" id="GO:0008033">
    <property type="term" value="P:tRNA processing"/>
    <property type="evidence" value="ECO:0007669"/>
    <property type="project" value="UniProtKB-UniRule"/>
</dbReference>
<dbReference type="CDD" id="cd02440">
    <property type="entry name" value="AdoMet_MTases"/>
    <property type="match status" value="1"/>
</dbReference>
<dbReference type="FunFam" id="3.30.200.20:FF:000613">
    <property type="entry name" value="Fibrillarin-like rRNA/tRNA 2'-O-methyltransferase"/>
    <property type="match status" value="1"/>
</dbReference>
<dbReference type="Gene3D" id="3.30.200.20">
    <property type="entry name" value="Phosphorylase Kinase, domain 1"/>
    <property type="match status" value="1"/>
</dbReference>
<dbReference type="Gene3D" id="3.40.50.150">
    <property type="entry name" value="Vaccinia Virus protein VP39"/>
    <property type="match status" value="1"/>
</dbReference>
<dbReference type="HAMAP" id="MF_00351">
    <property type="entry name" value="RNA_methyltransf_FlpA"/>
    <property type="match status" value="1"/>
</dbReference>
<dbReference type="InterPro" id="IPR000692">
    <property type="entry name" value="Fibrillarin"/>
</dbReference>
<dbReference type="InterPro" id="IPR020813">
    <property type="entry name" value="Fibrillarin_CS"/>
</dbReference>
<dbReference type="InterPro" id="IPR029063">
    <property type="entry name" value="SAM-dependent_MTases_sf"/>
</dbReference>
<dbReference type="NCBIfam" id="NF003275">
    <property type="entry name" value="PRK04266.1-1"/>
    <property type="match status" value="1"/>
</dbReference>
<dbReference type="NCBIfam" id="NF003276">
    <property type="entry name" value="PRK04266.1-2"/>
    <property type="match status" value="1"/>
</dbReference>
<dbReference type="NCBIfam" id="NF003277">
    <property type="entry name" value="PRK04266.1-3"/>
    <property type="match status" value="1"/>
</dbReference>
<dbReference type="PANTHER" id="PTHR10335:SF17">
    <property type="entry name" value="FIBRILLARIN"/>
    <property type="match status" value="1"/>
</dbReference>
<dbReference type="PANTHER" id="PTHR10335">
    <property type="entry name" value="RRNA 2-O-METHYLTRANSFERASE FIBRILLARIN"/>
    <property type="match status" value="1"/>
</dbReference>
<dbReference type="Pfam" id="PF01269">
    <property type="entry name" value="Fibrillarin"/>
    <property type="match status" value="1"/>
</dbReference>
<dbReference type="PIRSF" id="PIRSF006540">
    <property type="entry name" value="Nop17p"/>
    <property type="match status" value="1"/>
</dbReference>
<dbReference type="PRINTS" id="PR00052">
    <property type="entry name" value="FIBRILLARIN"/>
</dbReference>
<dbReference type="SMART" id="SM01206">
    <property type="entry name" value="Fibrillarin"/>
    <property type="match status" value="1"/>
</dbReference>
<dbReference type="SUPFAM" id="SSF53335">
    <property type="entry name" value="S-adenosyl-L-methionine-dependent methyltransferases"/>
    <property type="match status" value="1"/>
</dbReference>
<dbReference type="PROSITE" id="PS00566">
    <property type="entry name" value="FIBRILLARIN"/>
    <property type="match status" value="1"/>
</dbReference>
<accession>C3N5E4</accession>